<feature type="chain" id="PRO_0000259242" description="Large ribosomal subunit protein bL31">
    <location>
        <begin position="1"/>
        <end position="66"/>
    </location>
</feature>
<feature type="binding site" evidence="1">
    <location>
        <position position="16"/>
    </location>
    <ligand>
        <name>Zn(2+)</name>
        <dbReference type="ChEBI" id="CHEBI:29105"/>
    </ligand>
</feature>
<feature type="binding site" evidence="1">
    <location>
        <position position="18"/>
    </location>
    <ligand>
        <name>Zn(2+)</name>
        <dbReference type="ChEBI" id="CHEBI:29105"/>
    </ligand>
</feature>
<feature type="binding site" evidence="1">
    <location>
        <position position="36"/>
    </location>
    <ligand>
        <name>Zn(2+)</name>
        <dbReference type="ChEBI" id="CHEBI:29105"/>
    </ligand>
</feature>
<feature type="binding site" evidence="1">
    <location>
        <position position="39"/>
    </location>
    <ligand>
        <name>Zn(2+)</name>
        <dbReference type="ChEBI" id="CHEBI:29105"/>
    </ligand>
</feature>
<accession>Q30P97</accession>
<comment type="function">
    <text evidence="1">Binds the 23S rRNA.</text>
</comment>
<comment type="cofactor">
    <cofactor evidence="1">
        <name>Zn(2+)</name>
        <dbReference type="ChEBI" id="CHEBI:29105"/>
    </cofactor>
    <text evidence="1">Binds 1 zinc ion per subunit.</text>
</comment>
<comment type="subunit">
    <text evidence="1">Part of the 50S ribosomal subunit.</text>
</comment>
<comment type="similarity">
    <text evidence="1">Belongs to the bacterial ribosomal protein bL31 family. Type A subfamily.</text>
</comment>
<organism>
    <name type="scientific">Sulfurimonas denitrificans (strain ATCC 33889 / DSM 1251)</name>
    <name type="common">Thiomicrospira denitrificans (strain ATCC 33889 / DSM 1251)</name>
    <dbReference type="NCBI Taxonomy" id="326298"/>
    <lineage>
        <taxon>Bacteria</taxon>
        <taxon>Pseudomonadati</taxon>
        <taxon>Campylobacterota</taxon>
        <taxon>Epsilonproteobacteria</taxon>
        <taxon>Campylobacterales</taxon>
        <taxon>Sulfurimonadaceae</taxon>
        <taxon>Sulfurimonas</taxon>
    </lineage>
</organism>
<proteinExistence type="inferred from homology"/>
<gene>
    <name evidence="1" type="primary">rpmE</name>
    <name type="ordered locus">Suden_1910</name>
</gene>
<protein>
    <recommendedName>
        <fullName evidence="1">Large ribosomal subunit protein bL31</fullName>
    </recommendedName>
    <alternativeName>
        <fullName evidence="2">50S ribosomal protein L31</fullName>
    </alternativeName>
</protein>
<evidence type="ECO:0000255" key="1">
    <source>
        <dbReference type="HAMAP-Rule" id="MF_00501"/>
    </source>
</evidence>
<evidence type="ECO:0000305" key="2"/>
<reference key="1">
    <citation type="journal article" date="2008" name="Appl. Environ. Microbiol.">
        <title>Genome of the epsilonproteobacterial chemolithoautotroph Sulfurimonas denitrificans.</title>
        <authorList>
            <person name="Sievert S.M."/>
            <person name="Scott K.M."/>
            <person name="Klotz M.G."/>
            <person name="Chain P.S.G."/>
            <person name="Hauser L.J."/>
            <person name="Hemp J."/>
            <person name="Huegler M."/>
            <person name="Land M."/>
            <person name="Lapidus A."/>
            <person name="Larimer F.W."/>
            <person name="Lucas S."/>
            <person name="Malfatti S.A."/>
            <person name="Meyer F."/>
            <person name="Paulsen I.T."/>
            <person name="Ren Q."/>
            <person name="Simon J."/>
            <person name="Bailey K."/>
            <person name="Diaz E."/>
            <person name="Fitzpatrick K.A."/>
            <person name="Glover B."/>
            <person name="Gwatney N."/>
            <person name="Korajkic A."/>
            <person name="Long A."/>
            <person name="Mobberley J.M."/>
            <person name="Pantry S.N."/>
            <person name="Pazder G."/>
            <person name="Peterson S."/>
            <person name="Quintanilla J.D."/>
            <person name="Sprinkle R."/>
            <person name="Stephens J."/>
            <person name="Thomas P."/>
            <person name="Vaughn R."/>
            <person name="Weber M.J."/>
            <person name="Wooten L.L."/>
        </authorList>
    </citation>
    <scope>NUCLEOTIDE SEQUENCE [LARGE SCALE GENOMIC DNA]</scope>
    <source>
        <strain>ATCC 33889 / DSM 1251</strain>
    </source>
</reference>
<name>RL31_SULDN</name>
<dbReference type="EMBL" id="CP000153">
    <property type="protein sequence ID" value="ABB45184.1"/>
    <property type="molecule type" value="Genomic_DNA"/>
</dbReference>
<dbReference type="RefSeq" id="WP_011373524.1">
    <property type="nucleotide sequence ID" value="NC_007575.1"/>
</dbReference>
<dbReference type="SMR" id="Q30P97"/>
<dbReference type="STRING" id="326298.Suden_1910"/>
<dbReference type="KEGG" id="tdn:Suden_1910"/>
<dbReference type="eggNOG" id="COG0254">
    <property type="taxonomic scope" value="Bacteria"/>
</dbReference>
<dbReference type="HOGENOM" id="CLU_114306_4_3_7"/>
<dbReference type="OrthoDB" id="9803251at2"/>
<dbReference type="Proteomes" id="UP000002714">
    <property type="component" value="Chromosome"/>
</dbReference>
<dbReference type="GO" id="GO:1990904">
    <property type="term" value="C:ribonucleoprotein complex"/>
    <property type="evidence" value="ECO:0007669"/>
    <property type="project" value="UniProtKB-KW"/>
</dbReference>
<dbReference type="GO" id="GO:0005840">
    <property type="term" value="C:ribosome"/>
    <property type="evidence" value="ECO:0007669"/>
    <property type="project" value="UniProtKB-KW"/>
</dbReference>
<dbReference type="GO" id="GO:0046872">
    <property type="term" value="F:metal ion binding"/>
    <property type="evidence" value="ECO:0007669"/>
    <property type="project" value="UniProtKB-KW"/>
</dbReference>
<dbReference type="GO" id="GO:0019843">
    <property type="term" value="F:rRNA binding"/>
    <property type="evidence" value="ECO:0007669"/>
    <property type="project" value="UniProtKB-KW"/>
</dbReference>
<dbReference type="GO" id="GO:0003735">
    <property type="term" value="F:structural constituent of ribosome"/>
    <property type="evidence" value="ECO:0007669"/>
    <property type="project" value="InterPro"/>
</dbReference>
<dbReference type="GO" id="GO:0006412">
    <property type="term" value="P:translation"/>
    <property type="evidence" value="ECO:0007669"/>
    <property type="project" value="UniProtKB-UniRule"/>
</dbReference>
<dbReference type="Gene3D" id="4.10.830.30">
    <property type="entry name" value="Ribosomal protein L31"/>
    <property type="match status" value="1"/>
</dbReference>
<dbReference type="HAMAP" id="MF_00501">
    <property type="entry name" value="Ribosomal_bL31_1"/>
    <property type="match status" value="1"/>
</dbReference>
<dbReference type="InterPro" id="IPR034704">
    <property type="entry name" value="Ribosomal_bL28/bL31-like_sf"/>
</dbReference>
<dbReference type="InterPro" id="IPR002150">
    <property type="entry name" value="Ribosomal_bL31"/>
</dbReference>
<dbReference type="InterPro" id="IPR027491">
    <property type="entry name" value="Ribosomal_bL31_A"/>
</dbReference>
<dbReference type="InterPro" id="IPR042105">
    <property type="entry name" value="Ribosomal_bL31_sf"/>
</dbReference>
<dbReference type="NCBIfam" id="TIGR00105">
    <property type="entry name" value="L31"/>
    <property type="match status" value="1"/>
</dbReference>
<dbReference type="NCBIfam" id="NF000612">
    <property type="entry name" value="PRK00019.1"/>
    <property type="match status" value="1"/>
</dbReference>
<dbReference type="NCBIfam" id="NF001809">
    <property type="entry name" value="PRK00528.1"/>
    <property type="match status" value="1"/>
</dbReference>
<dbReference type="PANTHER" id="PTHR33280">
    <property type="entry name" value="50S RIBOSOMAL PROTEIN L31, CHLOROPLASTIC"/>
    <property type="match status" value="1"/>
</dbReference>
<dbReference type="PANTHER" id="PTHR33280:SF1">
    <property type="entry name" value="LARGE RIBOSOMAL SUBUNIT PROTEIN BL31C"/>
    <property type="match status" value="1"/>
</dbReference>
<dbReference type="Pfam" id="PF01197">
    <property type="entry name" value="Ribosomal_L31"/>
    <property type="match status" value="1"/>
</dbReference>
<dbReference type="PRINTS" id="PR01249">
    <property type="entry name" value="RIBOSOMALL31"/>
</dbReference>
<dbReference type="SUPFAM" id="SSF143800">
    <property type="entry name" value="L28p-like"/>
    <property type="match status" value="1"/>
</dbReference>
<dbReference type="PROSITE" id="PS01143">
    <property type="entry name" value="RIBOSOMAL_L31"/>
    <property type="match status" value="1"/>
</dbReference>
<sequence length="66" mass="7633">MKKDIHPKLVECTVTCSCGNSFKNESQKSEMRIDICNECHPFFTGSERMVDTAGRIDKFKKRYAQN</sequence>
<keyword id="KW-0479">Metal-binding</keyword>
<keyword id="KW-1185">Reference proteome</keyword>
<keyword id="KW-0687">Ribonucleoprotein</keyword>
<keyword id="KW-0689">Ribosomal protein</keyword>
<keyword id="KW-0694">RNA-binding</keyword>
<keyword id="KW-0699">rRNA-binding</keyword>
<keyword id="KW-0862">Zinc</keyword>